<protein>
    <recommendedName>
        <fullName>Putative ring-cleaving dioxygenase MhqA</fullName>
        <ecNumber>1.13.11.-</ecNumber>
    </recommendedName>
</protein>
<evidence type="ECO:0000255" key="1"/>
<evidence type="ECO:0000255" key="2">
    <source>
        <dbReference type="PROSITE-ProRule" id="PRU01163"/>
    </source>
</evidence>
<evidence type="ECO:0000269" key="3">
    <source>
    </source>
</evidence>
<evidence type="ECO:0000269" key="4">
    <source>
    </source>
</evidence>
<evidence type="ECO:0000305" key="5"/>
<dbReference type="EC" id="1.13.11.-"/>
<dbReference type="EMBL" id="AJ002571">
    <property type="protein sequence ID" value="CAA05567.1"/>
    <property type="molecule type" value="Genomic_DNA"/>
</dbReference>
<dbReference type="EMBL" id="AL009126">
    <property type="protein sequence ID" value="CAB13144.1"/>
    <property type="molecule type" value="Genomic_DNA"/>
</dbReference>
<dbReference type="PIR" id="C69855">
    <property type="entry name" value="C69855"/>
</dbReference>
<dbReference type="RefSeq" id="NP_389170.1">
    <property type="nucleotide sequence ID" value="NC_000964.3"/>
</dbReference>
<dbReference type="RefSeq" id="WP_003245086.1">
    <property type="nucleotide sequence ID" value="NZ_OZ025638.1"/>
</dbReference>
<dbReference type="SMR" id="O34689"/>
<dbReference type="FunCoup" id="O34689">
    <property type="interactions" value="66"/>
</dbReference>
<dbReference type="STRING" id="224308.BSU12870"/>
<dbReference type="PaxDb" id="224308-BSU12870"/>
<dbReference type="EnsemblBacteria" id="CAB13144">
    <property type="protein sequence ID" value="CAB13144"/>
    <property type="gene ID" value="BSU_12870"/>
</dbReference>
<dbReference type="GeneID" id="936149"/>
<dbReference type="KEGG" id="bsu:BSU12870"/>
<dbReference type="PATRIC" id="fig|224308.179.peg.1396"/>
<dbReference type="eggNOG" id="COG0346">
    <property type="taxonomic scope" value="Bacteria"/>
</dbReference>
<dbReference type="InParanoid" id="O34689"/>
<dbReference type="OrthoDB" id="9785698at2"/>
<dbReference type="PhylomeDB" id="O34689"/>
<dbReference type="BioCyc" id="BSUB:BSU12870-MONOMER"/>
<dbReference type="Proteomes" id="UP000001570">
    <property type="component" value="Chromosome"/>
</dbReference>
<dbReference type="GO" id="GO:0005737">
    <property type="term" value="C:cytoplasm"/>
    <property type="evidence" value="ECO:0007669"/>
    <property type="project" value="UniProtKB-SubCell"/>
</dbReference>
<dbReference type="GO" id="GO:0051213">
    <property type="term" value="F:dioxygenase activity"/>
    <property type="evidence" value="ECO:0007669"/>
    <property type="project" value="UniProtKB-KW"/>
</dbReference>
<dbReference type="GO" id="GO:0046872">
    <property type="term" value="F:metal ion binding"/>
    <property type="evidence" value="ECO:0007669"/>
    <property type="project" value="UniProtKB-KW"/>
</dbReference>
<dbReference type="GO" id="GO:0009056">
    <property type="term" value="P:catabolic process"/>
    <property type="evidence" value="ECO:0007669"/>
    <property type="project" value="UniProtKB-KW"/>
</dbReference>
<dbReference type="GO" id="GO:0009636">
    <property type="term" value="P:response to toxic substance"/>
    <property type="evidence" value="ECO:0007669"/>
    <property type="project" value="UniProtKB-KW"/>
</dbReference>
<dbReference type="CDD" id="cd08347">
    <property type="entry name" value="PcpA_C_like"/>
    <property type="match status" value="1"/>
</dbReference>
<dbReference type="CDD" id="cd08346">
    <property type="entry name" value="PcpA_N_like"/>
    <property type="match status" value="1"/>
</dbReference>
<dbReference type="Gene3D" id="3.10.180.10">
    <property type="entry name" value="2,3-Dihydroxybiphenyl 1,2-Dioxygenase, domain 1"/>
    <property type="match status" value="2"/>
</dbReference>
<dbReference type="InterPro" id="IPR052537">
    <property type="entry name" value="Extradiol_RC_dioxygenase"/>
</dbReference>
<dbReference type="InterPro" id="IPR029068">
    <property type="entry name" value="Glyas_Bleomycin-R_OHBP_Dase"/>
</dbReference>
<dbReference type="InterPro" id="IPR004360">
    <property type="entry name" value="Glyas_Fos-R_dOase_dom"/>
</dbReference>
<dbReference type="InterPro" id="IPR037523">
    <property type="entry name" value="VOC"/>
</dbReference>
<dbReference type="PANTHER" id="PTHR36110:SF4">
    <property type="entry name" value="RING-CLEAVING DIOXYGENASE MHQA-RELATED"/>
    <property type="match status" value="1"/>
</dbReference>
<dbReference type="PANTHER" id="PTHR36110">
    <property type="entry name" value="RING-CLEAVING DIOXYGENASE MHQE-RELATED"/>
    <property type="match status" value="1"/>
</dbReference>
<dbReference type="Pfam" id="PF00903">
    <property type="entry name" value="Glyoxalase"/>
    <property type="match status" value="2"/>
</dbReference>
<dbReference type="SUPFAM" id="SSF54593">
    <property type="entry name" value="Glyoxalase/Bleomycin resistance protein/Dihydroxybiphenyl dioxygenase"/>
    <property type="match status" value="1"/>
</dbReference>
<dbReference type="PROSITE" id="PS51819">
    <property type="entry name" value="VOC"/>
    <property type="match status" value="2"/>
</dbReference>
<feature type="chain" id="PRO_0000360756" description="Putative ring-cleaving dioxygenase MhqA">
    <location>
        <begin position="1"/>
        <end position="316"/>
    </location>
</feature>
<feature type="domain" description="VOC 1" evidence="2">
    <location>
        <begin position="5"/>
        <end position="131"/>
    </location>
</feature>
<feature type="domain" description="VOC 2" evidence="2">
    <location>
        <begin position="154"/>
        <end position="278"/>
    </location>
</feature>
<feature type="binding site" evidence="1">
    <location>
        <position position="8"/>
    </location>
    <ligand>
        <name>Fe cation</name>
        <dbReference type="ChEBI" id="CHEBI:24875"/>
    </ligand>
</feature>
<feature type="binding site" evidence="1">
    <location>
        <position position="226"/>
    </location>
    <ligand>
        <name>Fe cation</name>
        <dbReference type="ChEBI" id="CHEBI:24875"/>
    </ligand>
</feature>
<feature type="binding site" evidence="1">
    <location>
        <position position="274"/>
    </location>
    <ligand>
        <name>Fe cation</name>
        <dbReference type="ChEBI" id="CHEBI:24875"/>
    </ligand>
</feature>
<sequence>MKVNGIHHVSALTADAQKNLDFYKKVLGLKLVKKSVNQDEPTMYHLFYGDEVANPGTELTFFEIPRIAPFHAGTNSISSIGLRVPGTEALHYWKERFEEQQVTHSGISKRAGRDILAFQDHEGQRLVLTADEEGKGYGLPVKQSGIPEEFSFRGLGPVELTVPYAEPTLHVLTNILGFTEISREPVEGQGTAVILESGEGGAATEIHLIERNDLPRERQGKGSVHHVAFRVRDEEELAGWHRIISREGFSNSGIVERYYFKALYFREPNGILFELSTDGPGFMVDENLDELGQTIALPPYLEHRRAEIEAKLKPIQ</sequence>
<gene>
    <name type="primary">mhqA</name>
    <name type="synonym">ykcA</name>
    <name type="ordered locus">BSU12870</name>
</gene>
<keyword id="KW-0058">Aromatic hydrocarbons catabolism</keyword>
<keyword id="KW-0963">Cytoplasm</keyword>
<keyword id="KW-0216">Detoxification</keyword>
<keyword id="KW-0223">Dioxygenase</keyword>
<keyword id="KW-0408">Iron</keyword>
<keyword id="KW-0479">Metal-binding</keyword>
<keyword id="KW-0560">Oxidoreductase</keyword>
<keyword id="KW-1185">Reference proteome</keyword>
<keyword id="KW-0677">Repeat</keyword>
<name>MHQA_BACSU</name>
<accession>O34689</accession>
<accession>Q7B3Q9</accession>
<organism>
    <name type="scientific">Bacillus subtilis (strain 168)</name>
    <dbReference type="NCBI Taxonomy" id="224308"/>
    <lineage>
        <taxon>Bacteria</taxon>
        <taxon>Bacillati</taxon>
        <taxon>Bacillota</taxon>
        <taxon>Bacilli</taxon>
        <taxon>Bacillales</taxon>
        <taxon>Bacillaceae</taxon>
        <taxon>Bacillus</taxon>
    </lineage>
</organism>
<proteinExistence type="evidence at transcript level"/>
<reference key="1">
    <citation type="submission" date="1997-11" db="EMBL/GenBank/DDBJ databases">
        <title>Sequence of the Bacillus subtilis genome between xlyA and ykoR.</title>
        <authorList>
            <person name="Devine K.M."/>
        </authorList>
    </citation>
    <scope>NUCLEOTIDE SEQUENCE [GENOMIC DNA]</scope>
    <source>
        <strain>168</strain>
    </source>
</reference>
<reference key="2">
    <citation type="journal article" date="1997" name="Nature">
        <title>The complete genome sequence of the Gram-positive bacterium Bacillus subtilis.</title>
        <authorList>
            <person name="Kunst F."/>
            <person name="Ogasawara N."/>
            <person name="Moszer I."/>
            <person name="Albertini A.M."/>
            <person name="Alloni G."/>
            <person name="Azevedo V."/>
            <person name="Bertero M.G."/>
            <person name="Bessieres P."/>
            <person name="Bolotin A."/>
            <person name="Borchert S."/>
            <person name="Borriss R."/>
            <person name="Boursier L."/>
            <person name="Brans A."/>
            <person name="Braun M."/>
            <person name="Brignell S.C."/>
            <person name="Bron S."/>
            <person name="Brouillet S."/>
            <person name="Bruschi C.V."/>
            <person name="Caldwell B."/>
            <person name="Capuano V."/>
            <person name="Carter N.M."/>
            <person name="Choi S.-K."/>
            <person name="Codani J.-J."/>
            <person name="Connerton I.F."/>
            <person name="Cummings N.J."/>
            <person name="Daniel R.A."/>
            <person name="Denizot F."/>
            <person name="Devine K.M."/>
            <person name="Duesterhoeft A."/>
            <person name="Ehrlich S.D."/>
            <person name="Emmerson P.T."/>
            <person name="Entian K.-D."/>
            <person name="Errington J."/>
            <person name="Fabret C."/>
            <person name="Ferrari E."/>
            <person name="Foulger D."/>
            <person name="Fritz C."/>
            <person name="Fujita M."/>
            <person name="Fujita Y."/>
            <person name="Fuma S."/>
            <person name="Galizzi A."/>
            <person name="Galleron N."/>
            <person name="Ghim S.-Y."/>
            <person name="Glaser P."/>
            <person name="Goffeau A."/>
            <person name="Golightly E.J."/>
            <person name="Grandi G."/>
            <person name="Guiseppi G."/>
            <person name="Guy B.J."/>
            <person name="Haga K."/>
            <person name="Haiech J."/>
            <person name="Harwood C.R."/>
            <person name="Henaut A."/>
            <person name="Hilbert H."/>
            <person name="Holsappel S."/>
            <person name="Hosono S."/>
            <person name="Hullo M.-F."/>
            <person name="Itaya M."/>
            <person name="Jones L.-M."/>
            <person name="Joris B."/>
            <person name="Karamata D."/>
            <person name="Kasahara Y."/>
            <person name="Klaerr-Blanchard M."/>
            <person name="Klein C."/>
            <person name="Kobayashi Y."/>
            <person name="Koetter P."/>
            <person name="Koningstein G."/>
            <person name="Krogh S."/>
            <person name="Kumano M."/>
            <person name="Kurita K."/>
            <person name="Lapidus A."/>
            <person name="Lardinois S."/>
            <person name="Lauber J."/>
            <person name="Lazarevic V."/>
            <person name="Lee S.-M."/>
            <person name="Levine A."/>
            <person name="Liu H."/>
            <person name="Masuda S."/>
            <person name="Mauel C."/>
            <person name="Medigue C."/>
            <person name="Medina N."/>
            <person name="Mellado R.P."/>
            <person name="Mizuno M."/>
            <person name="Moestl D."/>
            <person name="Nakai S."/>
            <person name="Noback M."/>
            <person name="Noone D."/>
            <person name="O'Reilly M."/>
            <person name="Ogawa K."/>
            <person name="Ogiwara A."/>
            <person name="Oudega B."/>
            <person name="Park S.-H."/>
            <person name="Parro V."/>
            <person name="Pohl T.M."/>
            <person name="Portetelle D."/>
            <person name="Porwollik S."/>
            <person name="Prescott A.M."/>
            <person name="Presecan E."/>
            <person name="Pujic P."/>
            <person name="Purnelle B."/>
            <person name="Rapoport G."/>
            <person name="Rey M."/>
            <person name="Reynolds S."/>
            <person name="Rieger M."/>
            <person name="Rivolta C."/>
            <person name="Rocha E."/>
            <person name="Roche B."/>
            <person name="Rose M."/>
            <person name="Sadaie Y."/>
            <person name="Sato T."/>
            <person name="Scanlan E."/>
            <person name="Schleich S."/>
            <person name="Schroeter R."/>
            <person name="Scoffone F."/>
            <person name="Sekiguchi J."/>
            <person name="Sekowska A."/>
            <person name="Seror S.J."/>
            <person name="Serror P."/>
            <person name="Shin B.-S."/>
            <person name="Soldo B."/>
            <person name="Sorokin A."/>
            <person name="Tacconi E."/>
            <person name="Takagi T."/>
            <person name="Takahashi H."/>
            <person name="Takemaru K."/>
            <person name="Takeuchi M."/>
            <person name="Tamakoshi A."/>
            <person name="Tanaka T."/>
            <person name="Terpstra P."/>
            <person name="Tognoni A."/>
            <person name="Tosato V."/>
            <person name="Uchiyama S."/>
            <person name="Vandenbol M."/>
            <person name="Vannier F."/>
            <person name="Vassarotti A."/>
            <person name="Viari A."/>
            <person name="Wambutt R."/>
            <person name="Wedler E."/>
            <person name="Wedler H."/>
            <person name="Weitzenegger T."/>
            <person name="Winters P."/>
            <person name="Wipat A."/>
            <person name="Yamamoto H."/>
            <person name="Yamane K."/>
            <person name="Yasumoto K."/>
            <person name="Yata K."/>
            <person name="Yoshida K."/>
            <person name="Yoshikawa H.-F."/>
            <person name="Zumstein E."/>
            <person name="Yoshikawa H."/>
            <person name="Danchin A."/>
        </authorList>
    </citation>
    <scope>NUCLEOTIDE SEQUENCE [LARGE SCALE GENOMIC DNA]</scope>
    <source>
        <strain>168</strain>
    </source>
</reference>
<reference key="3">
    <citation type="journal article" date="2007" name="Mol. Microbiol.">
        <title>The MarR-type repressor MhqR (YkvE) regulates multiple dioxygenases/glyoxalases and an azoreductase which confer resistance to 2-methylhydroquinone and catechol in Bacillus subtilis.</title>
        <authorList>
            <person name="Toewe S."/>
            <person name="Leelakriangsak M."/>
            <person name="Kobayashi K."/>
            <person name="Van Duy N."/>
            <person name="Hecker M."/>
            <person name="Zuber P."/>
            <person name="Antelmann H."/>
        </authorList>
    </citation>
    <scope>INDUCTION</scope>
    <scope>SUBCELLULAR LOCATION</scope>
    <source>
        <strain>168</strain>
    </source>
</reference>
<reference key="4">
    <citation type="journal article" date="2007" name="Proteomics">
        <title>Transcriptome and proteome analyses in response to 2-methylhydroquinone and 6-brom-2-vinyl-chroman-4-on reveal different degradation systems involved in the catabolism of aromatic compounds in Bacillus subtilis.</title>
        <authorList>
            <person name="Nguyen V.D."/>
            <person name="Wolf C."/>
            <person name="Maeder U."/>
            <person name="Lalk M."/>
            <person name="Langer P."/>
            <person name="Lindequist U."/>
            <person name="Hecker M."/>
            <person name="Antelmann H."/>
        </authorList>
    </citation>
    <scope>INDUCTION</scope>
    <scope>SUBCELLULAR LOCATION</scope>
    <scope>NOMENCLATURE</scope>
    <source>
        <strain>168</strain>
    </source>
</reference>
<comment type="function">
    <text evidence="5">Putative ring-cleavage dioxygenase that may contribute to the degradation of aromatic compounds.</text>
</comment>
<comment type="cofactor">
    <cofactor evidence="5">
        <name>Fe(2+)</name>
        <dbReference type="ChEBI" id="CHEBI:29033"/>
    </cofactor>
    <text evidence="5">Binds 1 Fe(2+) ion.</text>
</comment>
<comment type="subcellular location">
    <subcellularLocation>
        <location evidence="3 4">Cytoplasm</location>
    </subcellularLocation>
</comment>
<comment type="induction">
    <text evidence="3 4">Repressed by MhqR. Strongly induced by stress due to exposure to 2-methylhydroquinone (2-MHQ) and less strongly induced after diamide or catechol stress. Not induced by oxidative stress due to hydrogen peroxide or methylglyoxal.</text>
</comment>
<comment type="similarity">
    <text evidence="5">Belongs to the extradiol ring-cleavage dioxygenase family.</text>
</comment>